<evidence type="ECO:0000250" key="1"/>
<evidence type="ECO:0000305" key="2"/>
<dbReference type="EC" id="3.5.3.6"/>
<dbReference type="EMBL" id="AE015929">
    <property type="protein sequence ID" value="AAO03703.1"/>
    <property type="molecule type" value="Genomic_DNA"/>
</dbReference>
<dbReference type="RefSeq" id="NP_763661.1">
    <property type="nucleotide sequence ID" value="NC_004461.1"/>
</dbReference>
<dbReference type="SMR" id="Q8CQG5"/>
<dbReference type="KEGG" id="sep:SE_0106"/>
<dbReference type="PATRIC" id="fig|176280.10.peg.100"/>
<dbReference type="eggNOG" id="COG2235">
    <property type="taxonomic scope" value="Bacteria"/>
</dbReference>
<dbReference type="HOGENOM" id="CLU_052662_0_1_9"/>
<dbReference type="OrthoDB" id="9807502at2"/>
<dbReference type="UniPathway" id="UPA00254">
    <property type="reaction ID" value="UER00364"/>
</dbReference>
<dbReference type="Proteomes" id="UP000001411">
    <property type="component" value="Chromosome"/>
</dbReference>
<dbReference type="GO" id="GO:0005737">
    <property type="term" value="C:cytoplasm"/>
    <property type="evidence" value="ECO:0007669"/>
    <property type="project" value="UniProtKB-SubCell"/>
</dbReference>
<dbReference type="GO" id="GO:0016990">
    <property type="term" value="F:arginine deiminase activity"/>
    <property type="evidence" value="ECO:0007669"/>
    <property type="project" value="UniProtKB-UniRule"/>
</dbReference>
<dbReference type="GO" id="GO:0019547">
    <property type="term" value="P:arginine catabolic process to ornithine"/>
    <property type="evidence" value="ECO:0007669"/>
    <property type="project" value="UniProtKB-UniRule"/>
</dbReference>
<dbReference type="GO" id="GO:0019546">
    <property type="term" value="P:arginine deiminase pathway"/>
    <property type="evidence" value="ECO:0007669"/>
    <property type="project" value="TreeGrafter"/>
</dbReference>
<dbReference type="Gene3D" id="1.10.3930.10">
    <property type="entry name" value="Arginine deiminase"/>
    <property type="match status" value="1"/>
</dbReference>
<dbReference type="Gene3D" id="3.75.10.10">
    <property type="entry name" value="L-arginine/glycine Amidinotransferase, Chain A"/>
    <property type="match status" value="1"/>
</dbReference>
<dbReference type="HAMAP" id="MF_00242">
    <property type="entry name" value="Arg_deiminase"/>
    <property type="match status" value="1"/>
</dbReference>
<dbReference type="InterPro" id="IPR003876">
    <property type="entry name" value="Arg_deiminase"/>
</dbReference>
<dbReference type="NCBIfam" id="TIGR01078">
    <property type="entry name" value="arcA"/>
    <property type="match status" value="1"/>
</dbReference>
<dbReference type="NCBIfam" id="NF002381">
    <property type="entry name" value="PRK01388.1"/>
    <property type="match status" value="1"/>
</dbReference>
<dbReference type="PANTHER" id="PTHR47271">
    <property type="entry name" value="ARGININE DEIMINASE"/>
    <property type="match status" value="1"/>
</dbReference>
<dbReference type="PANTHER" id="PTHR47271:SF2">
    <property type="entry name" value="ARGININE DEIMINASE"/>
    <property type="match status" value="1"/>
</dbReference>
<dbReference type="Pfam" id="PF02274">
    <property type="entry name" value="ADI"/>
    <property type="match status" value="1"/>
</dbReference>
<dbReference type="PIRSF" id="PIRSF006356">
    <property type="entry name" value="Arg_deiminase"/>
    <property type="match status" value="1"/>
</dbReference>
<dbReference type="PRINTS" id="PR01466">
    <property type="entry name" value="ARGDEIMINASE"/>
</dbReference>
<dbReference type="SUPFAM" id="SSF55909">
    <property type="entry name" value="Pentein"/>
    <property type="match status" value="1"/>
</dbReference>
<name>ARCA1_STAES</name>
<protein>
    <recommendedName>
        <fullName>Arginine deiminase 1</fullName>
        <shortName>ADI 1</shortName>
        <ecNumber>3.5.3.6</ecNumber>
    </recommendedName>
    <alternativeName>
        <fullName>Arginine dihydrolase 1</fullName>
        <shortName>AD 1</shortName>
    </alternativeName>
</protein>
<proteinExistence type="inferred from homology"/>
<comment type="catalytic activity">
    <reaction>
        <text>L-arginine + H2O = L-citrulline + NH4(+)</text>
        <dbReference type="Rhea" id="RHEA:19597"/>
        <dbReference type="ChEBI" id="CHEBI:15377"/>
        <dbReference type="ChEBI" id="CHEBI:28938"/>
        <dbReference type="ChEBI" id="CHEBI:32682"/>
        <dbReference type="ChEBI" id="CHEBI:57743"/>
        <dbReference type="EC" id="3.5.3.6"/>
    </reaction>
</comment>
<comment type="pathway">
    <text>Amino-acid degradation; L-arginine degradation via ADI pathway; carbamoyl phosphate from L-arginine: step 1/2.</text>
</comment>
<comment type="subcellular location">
    <subcellularLocation>
        <location evidence="2">Cytoplasm</location>
    </subcellularLocation>
</comment>
<comment type="similarity">
    <text evidence="2">Belongs to the arginine deiminase family.</text>
</comment>
<organism>
    <name type="scientific">Staphylococcus epidermidis (strain ATCC 12228 / FDA PCI 1200)</name>
    <dbReference type="NCBI Taxonomy" id="176280"/>
    <lineage>
        <taxon>Bacteria</taxon>
        <taxon>Bacillati</taxon>
        <taxon>Bacillota</taxon>
        <taxon>Bacilli</taxon>
        <taxon>Bacillales</taxon>
        <taxon>Staphylococcaceae</taxon>
        <taxon>Staphylococcus</taxon>
    </lineage>
</organism>
<reference key="1">
    <citation type="journal article" date="2003" name="Mol. Microbiol.">
        <title>Genome-based analysis of virulence genes in a non-biofilm-forming Staphylococcus epidermidis strain (ATCC 12228).</title>
        <authorList>
            <person name="Zhang Y.-Q."/>
            <person name="Ren S.-X."/>
            <person name="Li H.-L."/>
            <person name="Wang Y.-X."/>
            <person name="Fu G."/>
            <person name="Yang J."/>
            <person name="Qin Z.-Q."/>
            <person name="Miao Y.-G."/>
            <person name="Wang W.-Y."/>
            <person name="Chen R.-S."/>
            <person name="Shen Y."/>
            <person name="Chen Z."/>
            <person name="Yuan Z.-H."/>
            <person name="Zhao G.-P."/>
            <person name="Qu D."/>
            <person name="Danchin A."/>
            <person name="Wen Y.-M."/>
        </authorList>
    </citation>
    <scope>NUCLEOTIDE SEQUENCE [LARGE SCALE GENOMIC DNA]</scope>
    <source>
        <strain>ATCC 12228 / FDA PCI 1200</strain>
    </source>
</reference>
<gene>
    <name type="primary">arcA1</name>
    <name type="ordered locus">SE_0106</name>
</gene>
<keyword id="KW-0056">Arginine metabolism</keyword>
<keyword id="KW-0963">Cytoplasm</keyword>
<keyword id="KW-0378">Hydrolase</keyword>
<sequence>MVQGPIQVNSEIGKLKTVLLKRPGKELENLVPDHLSGLLFDDIPYLKVAQEEHDKFAQTLRDEGIEVVYLEKLAAESITEPEVRENFINDILTESKKTILGHETEIKEFFSKLSDQELVNKIMAGIRKEEIQLETTHLVEYMDDRYPFYLDPMPNLYFTRDPQASIGRGMTINRMYWRARRRESIFMTYILKHHPRFKDKDVPVWLDRNSPFNIEGGDELVLSKDVLAIGISERTSAQAIEKLARNIFKDANTSFKKIVAIEIPNTRTFMHLDTVLTMIDYDKFTVHAAIFKEENNMNIFTIEQNDGKDDIKITRSSKLRETLAEVLEVEKVDFIPTGNGDVIDGAREQWNDGSNTLCIRPGVVVTYDRNYVSNQLLRDKGIKVIEITGSELVRGRGGPRCMSQPLFREDI</sequence>
<accession>Q8CQG5</accession>
<feature type="chain" id="PRO_0000182240" description="Arginine deiminase 1">
    <location>
        <begin position="1"/>
        <end position="411"/>
    </location>
</feature>
<feature type="active site" description="Amidino-cysteine intermediate" evidence="1">
    <location>
        <position position="401"/>
    </location>
</feature>